<gene>
    <name evidence="1" type="primary">garL</name>
    <name type="ordered locus">KPN78578_35090</name>
    <name type="ORF">KPN_03538</name>
</gene>
<feature type="chain" id="PRO_0000353152" description="5-keto-4-deoxy-D-glucarate aldolase">
    <location>
        <begin position="1"/>
        <end position="256"/>
    </location>
</feature>
<feature type="active site" description="Proton acceptor" evidence="1">
    <location>
        <position position="50"/>
    </location>
</feature>
<feature type="binding site" evidence="1">
    <location>
        <position position="151"/>
    </location>
    <ligand>
        <name>substrate</name>
    </ligand>
</feature>
<feature type="binding site" evidence="1">
    <location>
        <position position="153"/>
    </location>
    <ligand>
        <name>Mg(2+)</name>
        <dbReference type="ChEBI" id="CHEBI:18420"/>
    </ligand>
</feature>
<feature type="binding site" evidence="1">
    <location>
        <position position="178"/>
    </location>
    <ligand>
        <name>substrate</name>
    </ligand>
</feature>
<feature type="binding site" evidence="1">
    <location>
        <position position="179"/>
    </location>
    <ligand>
        <name>Mg(2+)</name>
        <dbReference type="ChEBI" id="CHEBI:18420"/>
    </ligand>
</feature>
<feature type="binding site" evidence="1">
    <location>
        <position position="179"/>
    </location>
    <ligand>
        <name>substrate</name>
    </ligand>
</feature>
<feature type="site" description="Transition state stabilizer" evidence="1">
    <location>
        <position position="75"/>
    </location>
</feature>
<feature type="site" description="Increases basicity of active site His" evidence="1">
    <location>
        <position position="89"/>
    </location>
</feature>
<proteinExistence type="inferred from homology"/>
<reference key="1">
    <citation type="submission" date="2006-09" db="EMBL/GenBank/DDBJ databases">
        <authorList>
            <consortium name="The Klebsiella pneumonia Genome Sequencing Project"/>
            <person name="McClelland M."/>
            <person name="Sanderson E.K."/>
            <person name="Spieth J."/>
            <person name="Clifton W.S."/>
            <person name="Latreille P."/>
            <person name="Sabo A."/>
            <person name="Pepin K."/>
            <person name="Bhonagiri V."/>
            <person name="Porwollik S."/>
            <person name="Ali J."/>
            <person name="Wilson R.K."/>
        </authorList>
    </citation>
    <scope>NUCLEOTIDE SEQUENCE [LARGE SCALE GENOMIC DNA]</scope>
    <source>
        <strain>ATCC 700721 / MGH 78578</strain>
    </source>
</reference>
<sequence>MDNAIFPNKFKAALAAHQVQIGCWCALANPISTEVLGLAGFDWLVLDAEHAPNDVTTLIPQLMALKGSSSAQVVRVPTNEPIIIKRMLDIGFYNFLVPFVETAEQAAQAVASTRYPPEGIRGVSVSHRGNMFGTVPDYFAQSNKNISILVQIESQTGVDNVEAIAATEGVDGVFVGPSDLAAALGHLGNASHPEVQRAIQHIFASAKKHGKPSGILAPVEADARRYLEWGATFVAVGSDLGVFRSATQKLADAFKK</sequence>
<protein>
    <recommendedName>
        <fullName evidence="1">5-keto-4-deoxy-D-glucarate aldolase</fullName>
        <shortName evidence="1">KDGluc aldolase</shortName>
        <shortName evidence="1">KDGlucA</shortName>
        <ecNumber evidence="1">4.1.2.20</ecNumber>
    </recommendedName>
    <alternativeName>
        <fullName evidence="1">2-dehydro-3-deoxy-D-glucarate aldolase</fullName>
    </alternativeName>
    <alternativeName>
        <fullName evidence="1">2-keto-3-deoxy-D-glucarate aldolase</fullName>
    </alternativeName>
    <alternativeName>
        <fullName evidence="1">5-dehydro-4-deoxy-D-glucarate aldolase</fullName>
    </alternativeName>
    <alternativeName>
        <fullName evidence="1">Alpha-keto-beta-deoxy-D-glucarate aldolase</fullName>
    </alternativeName>
</protein>
<keyword id="KW-0456">Lyase</keyword>
<keyword id="KW-0460">Magnesium</keyword>
<keyword id="KW-0479">Metal-binding</keyword>
<dbReference type="EC" id="4.1.2.20" evidence="1"/>
<dbReference type="EMBL" id="CP000647">
    <property type="protein sequence ID" value="ABR78933.1"/>
    <property type="molecule type" value="Genomic_DNA"/>
</dbReference>
<dbReference type="RefSeq" id="WP_004144873.1">
    <property type="nucleotide sequence ID" value="NC_009648.1"/>
</dbReference>
<dbReference type="SMR" id="A6TEE9"/>
<dbReference type="STRING" id="272620.KPN_03538"/>
<dbReference type="PaxDb" id="272620-KPN_03538"/>
<dbReference type="EnsemblBacteria" id="ABR78933">
    <property type="protein sequence ID" value="ABR78933"/>
    <property type="gene ID" value="KPN_03538"/>
</dbReference>
<dbReference type="KEGG" id="kpn:KPN_03538"/>
<dbReference type="HOGENOM" id="CLU_059964_1_0_6"/>
<dbReference type="UniPathway" id="UPA00565">
    <property type="reaction ID" value="UER00630"/>
</dbReference>
<dbReference type="Proteomes" id="UP000000265">
    <property type="component" value="Chromosome"/>
</dbReference>
<dbReference type="GO" id="GO:0005737">
    <property type="term" value="C:cytoplasm"/>
    <property type="evidence" value="ECO:0007669"/>
    <property type="project" value="TreeGrafter"/>
</dbReference>
<dbReference type="GO" id="GO:0008672">
    <property type="term" value="F:2-dehydro-3-deoxyglucarate aldolase activity"/>
    <property type="evidence" value="ECO:0007669"/>
    <property type="project" value="UniProtKB-UniRule"/>
</dbReference>
<dbReference type="GO" id="GO:0000287">
    <property type="term" value="F:magnesium ion binding"/>
    <property type="evidence" value="ECO:0007669"/>
    <property type="project" value="UniProtKB-UniRule"/>
</dbReference>
<dbReference type="GO" id="GO:0042838">
    <property type="term" value="P:D-glucarate catabolic process"/>
    <property type="evidence" value="ECO:0007669"/>
    <property type="project" value="UniProtKB-UniRule"/>
</dbReference>
<dbReference type="GO" id="GO:0046392">
    <property type="term" value="P:galactarate catabolic process"/>
    <property type="evidence" value="ECO:0007669"/>
    <property type="project" value="UniProtKB-UniRule"/>
</dbReference>
<dbReference type="FunFam" id="3.20.20.60:FF:000004">
    <property type="entry name" value="5-keto-4-deoxy-D-glucarate aldolase"/>
    <property type="match status" value="1"/>
</dbReference>
<dbReference type="Gene3D" id="3.20.20.60">
    <property type="entry name" value="Phosphoenolpyruvate-binding domains"/>
    <property type="match status" value="1"/>
</dbReference>
<dbReference type="HAMAP" id="MF_01291">
    <property type="entry name" value="KDGluc_aldolase"/>
    <property type="match status" value="1"/>
</dbReference>
<dbReference type="InterPro" id="IPR005000">
    <property type="entry name" value="Aldolase/citrate-lyase_domain"/>
</dbReference>
<dbReference type="InterPro" id="IPR017648">
    <property type="entry name" value="GarL"/>
</dbReference>
<dbReference type="InterPro" id="IPR050251">
    <property type="entry name" value="HpcH-HpaI_aldolase"/>
</dbReference>
<dbReference type="InterPro" id="IPR015813">
    <property type="entry name" value="Pyrv/PenolPyrv_kinase-like_dom"/>
</dbReference>
<dbReference type="InterPro" id="IPR040442">
    <property type="entry name" value="Pyrv_kinase-like_dom_sf"/>
</dbReference>
<dbReference type="NCBIfam" id="TIGR03239">
    <property type="entry name" value="GarL"/>
    <property type="match status" value="1"/>
</dbReference>
<dbReference type="NCBIfam" id="NF007849">
    <property type="entry name" value="PRK10558.1"/>
    <property type="match status" value="1"/>
</dbReference>
<dbReference type="PANTHER" id="PTHR30502">
    <property type="entry name" value="2-KETO-3-DEOXY-L-RHAMNONATE ALDOLASE"/>
    <property type="match status" value="1"/>
</dbReference>
<dbReference type="PANTHER" id="PTHR30502:SF4">
    <property type="entry name" value="5-KETO-4-DEOXY-D-GLUCARATE ALDOLASE"/>
    <property type="match status" value="1"/>
</dbReference>
<dbReference type="Pfam" id="PF03328">
    <property type="entry name" value="HpcH_HpaI"/>
    <property type="match status" value="1"/>
</dbReference>
<dbReference type="SUPFAM" id="SSF51621">
    <property type="entry name" value="Phosphoenolpyruvate/pyruvate domain"/>
    <property type="match status" value="1"/>
</dbReference>
<accession>A6TEE9</accession>
<name>GARL_KLEP7</name>
<evidence type="ECO:0000255" key="1">
    <source>
        <dbReference type="HAMAP-Rule" id="MF_01291"/>
    </source>
</evidence>
<organism>
    <name type="scientific">Klebsiella pneumoniae subsp. pneumoniae (strain ATCC 700721 / MGH 78578)</name>
    <dbReference type="NCBI Taxonomy" id="272620"/>
    <lineage>
        <taxon>Bacteria</taxon>
        <taxon>Pseudomonadati</taxon>
        <taxon>Pseudomonadota</taxon>
        <taxon>Gammaproteobacteria</taxon>
        <taxon>Enterobacterales</taxon>
        <taxon>Enterobacteriaceae</taxon>
        <taxon>Klebsiella/Raoultella group</taxon>
        <taxon>Klebsiella</taxon>
        <taxon>Klebsiella pneumoniae complex</taxon>
    </lineage>
</organism>
<comment type="function">
    <text evidence="1">Catalyzes the reversible retro-aldol cleavage of both 5-keto-4-deoxy-D-glucarate and 2-keto-3-deoxy-D-glucarate to pyruvate and tartronic semialdehyde.</text>
</comment>
<comment type="catalytic activity">
    <reaction evidence="1">
        <text>5-dehydro-4-deoxy-D-glucarate = 2-hydroxy-3-oxopropanoate + pyruvate</text>
        <dbReference type="Rhea" id="RHEA:27726"/>
        <dbReference type="ChEBI" id="CHEBI:15361"/>
        <dbReference type="ChEBI" id="CHEBI:42819"/>
        <dbReference type="ChEBI" id="CHEBI:57978"/>
    </reaction>
</comment>
<comment type="catalytic activity">
    <reaction evidence="1">
        <text>2-dehydro-3-deoxy-D-glucarate = 2-hydroxy-3-oxopropanoate + pyruvate</text>
        <dbReference type="Rhea" id="RHEA:10268"/>
        <dbReference type="ChEBI" id="CHEBI:15361"/>
        <dbReference type="ChEBI" id="CHEBI:57978"/>
        <dbReference type="ChEBI" id="CHEBI:58098"/>
        <dbReference type="EC" id="4.1.2.20"/>
    </reaction>
</comment>
<comment type="cofactor">
    <cofactor evidence="1">
        <name>Mg(2+)</name>
        <dbReference type="ChEBI" id="CHEBI:18420"/>
    </cofactor>
    <text evidence="1">Binds 1 Mg(2+) ion per subunit.</text>
</comment>
<comment type="pathway">
    <text evidence="1">Carbohydrate acid metabolism; galactarate degradation; D-glycerate from galactarate: step 2/3.</text>
</comment>
<comment type="subunit">
    <text evidence="1">Homohexamer; trimer of dimers.</text>
</comment>
<comment type="similarity">
    <text evidence="1">Belongs to the HpcH/HpaI aldolase family. KDGluc aldolase subfamily.</text>
</comment>